<comment type="function">
    <text evidence="1">Essential component of the cytosolic iron-sulfur (Fe/S) protein assembly machinery. Required for the maturation of extramitochondrial Fe/S proteins.</text>
</comment>
<comment type="similarity">
    <text evidence="1">Belongs to the WD repeat CIA1 family.</text>
</comment>
<protein>
    <recommendedName>
        <fullName evidence="1">Probable cytosolic iron-sulfur protein assembly protein 1</fullName>
    </recommendedName>
</protein>
<proteinExistence type="inferred from homology"/>
<sequence length="462" mass="50824">MAAESSSQLSLLSDLTPPSLERTWLSAPHPTLPIVATCSSDKTVRVYSLTNFRLLSTITGGHKRSVRTCAWKPHVKGESVLATGSFDATVGIWRRWDSYGQTERGIEDWHRADTHDHADDMTNGNGAAGIDNDGGDGADEDDEEWRFAVLLDGHDSEVKSVSWSPSGMLLATCSRDKSIWIWEDLDDGDNNFETVAVMQEHQGDVKCVAWHPVEECLASASYDDTIRLWREDLDDWGQVACIKGHQGTVWCVDWEGAENVPSAPTDLADGDLATAQWKKAHALSGPRLVSCSDDRTVRIWRRQPKEQQQHQAQPSPFGGSGIPSIIRPTGSDEFWDEECVLPQAHDLSIYTVAWSKRTGRLASVGADGRIVVYEERLVVGSTAETMETDPPTSADGTAADSPAALRTEWRVIATVDGAHGIYEINHVSWAKRADRGRTEGTDEEVLITTADDGTVKVWTLKM</sequence>
<name>CIAO1_NEOFI</name>
<dbReference type="EMBL" id="DS027688">
    <property type="protein sequence ID" value="EAW22975.1"/>
    <property type="molecule type" value="Genomic_DNA"/>
</dbReference>
<dbReference type="RefSeq" id="XP_001264872.1">
    <property type="nucleotide sequence ID" value="XM_001264871.1"/>
</dbReference>
<dbReference type="SMR" id="A1D3I2"/>
<dbReference type="STRING" id="331117.A1D3I2"/>
<dbReference type="EnsemblFungi" id="EAW22975">
    <property type="protein sequence ID" value="EAW22975"/>
    <property type="gene ID" value="NFIA_016710"/>
</dbReference>
<dbReference type="GeneID" id="4591423"/>
<dbReference type="KEGG" id="nfi:NFIA_016710"/>
<dbReference type="VEuPathDB" id="FungiDB:NFIA_016710"/>
<dbReference type="eggNOG" id="KOG0645">
    <property type="taxonomic scope" value="Eukaryota"/>
</dbReference>
<dbReference type="HOGENOM" id="CLU_000288_57_8_1"/>
<dbReference type="OMA" id="IREIRWS"/>
<dbReference type="OrthoDB" id="284782at2759"/>
<dbReference type="Proteomes" id="UP000006702">
    <property type="component" value="Unassembled WGS sequence"/>
</dbReference>
<dbReference type="GO" id="GO:0097361">
    <property type="term" value="C:cytosolic [4Fe-4S] assembly targeting complex"/>
    <property type="evidence" value="ECO:0007669"/>
    <property type="project" value="InterPro"/>
</dbReference>
<dbReference type="GO" id="GO:0016226">
    <property type="term" value="P:iron-sulfur cluster assembly"/>
    <property type="evidence" value="ECO:0007669"/>
    <property type="project" value="UniProtKB-UniRule"/>
</dbReference>
<dbReference type="Gene3D" id="2.130.10.10">
    <property type="entry name" value="YVTN repeat-like/Quinoprotein amine dehydrogenase"/>
    <property type="match status" value="1"/>
</dbReference>
<dbReference type="HAMAP" id="MF_03037">
    <property type="entry name" value="ciao1"/>
    <property type="match status" value="1"/>
</dbReference>
<dbReference type="InterPro" id="IPR028608">
    <property type="entry name" value="CIAO1/Cia1"/>
</dbReference>
<dbReference type="InterPro" id="IPR020472">
    <property type="entry name" value="G-protein_beta_WD-40_rep"/>
</dbReference>
<dbReference type="InterPro" id="IPR015943">
    <property type="entry name" value="WD40/YVTN_repeat-like_dom_sf"/>
</dbReference>
<dbReference type="InterPro" id="IPR036322">
    <property type="entry name" value="WD40_repeat_dom_sf"/>
</dbReference>
<dbReference type="InterPro" id="IPR001680">
    <property type="entry name" value="WD40_rpt"/>
</dbReference>
<dbReference type="PANTHER" id="PTHR19920:SF0">
    <property type="entry name" value="CYTOSOLIC IRON-SULFUR PROTEIN ASSEMBLY PROTEIN CIAO1-RELATED"/>
    <property type="match status" value="1"/>
</dbReference>
<dbReference type="PANTHER" id="PTHR19920">
    <property type="entry name" value="WD40 PROTEIN CIAO1"/>
    <property type="match status" value="1"/>
</dbReference>
<dbReference type="Pfam" id="PF00400">
    <property type="entry name" value="WD40"/>
    <property type="match status" value="6"/>
</dbReference>
<dbReference type="PRINTS" id="PR00320">
    <property type="entry name" value="GPROTEINBRPT"/>
</dbReference>
<dbReference type="SMART" id="SM00320">
    <property type="entry name" value="WD40"/>
    <property type="match status" value="7"/>
</dbReference>
<dbReference type="SUPFAM" id="SSF50978">
    <property type="entry name" value="WD40 repeat-like"/>
    <property type="match status" value="1"/>
</dbReference>
<dbReference type="PROSITE" id="PS50082">
    <property type="entry name" value="WD_REPEATS_2"/>
    <property type="match status" value="4"/>
</dbReference>
<dbReference type="PROSITE" id="PS50294">
    <property type="entry name" value="WD_REPEATS_REGION"/>
    <property type="match status" value="2"/>
</dbReference>
<keyword id="KW-1185">Reference proteome</keyword>
<keyword id="KW-0677">Repeat</keyword>
<keyword id="KW-0853">WD repeat</keyword>
<feature type="chain" id="PRO_0000382520" description="Probable cytosolic iron-sulfur protein assembly protein 1">
    <location>
        <begin position="1"/>
        <end position="462"/>
    </location>
</feature>
<feature type="repeat" description="WD 1">
    <location>
        <begin position="15"/>
        <end position="57"/>
    </location>
</feature>
<feature type="repeat" description="WD 2">
    <location>
        <begin position="61"/>
        <end position="103"/>
    </location>
</feature>
<feature type="repeat" description="WD 3">
    <location>
        <begin position="153"/>
        <end position="192"/>
    </location>
</feature>
<feature type="repeat" description="WD 4">
    <location>
        <begin position="200"/>
        <end position="239"/>
    </location>
</feature>
<feature type="repeat" description="WD 5">
    <location>
        <begin position="244"/>
        <end position="310"/>
    </location>
</feature>
<feature type="repeat" description="WD 6">
    <location>
        <begin position="344"/>
        <end position="383"/>
    </location>
</feature>
<feature type="repeat" description="WD 7">
    <location>
        <begin position="418"/>
        <end position="459"/>
    </location>
</feature>
<feature type="region of interest" description="Disordered" evidence="2">
    <location>
        <begin position="116"/>
        <end position="140"/>
    </location>
</feature>
<feature type="region of interest" description="Disordered" evidence="2">
    <location>
        <begin position="303"/>
        <end position="323"/>
    </location>
</feature>
<gene>
    <name type="primary">cia1</name>
    <name type="ORF">NFIA_016710</name>
</gene>
<accession>A1D3I2</accession>
<organism>
    <name type="scientific">Neosartorya fischeri (strain ATCC 1020 / DSM 3700 / CBS 544.65 / FGSC A1164 / JCM 1740 / NRRL 181 / WB 181)</name>
    <name type="common">Aspergillus fischerianus</name>
    <dbReference type="NCBI Taxonomy" id="331117"/>
    <lineage>
        <taxon>Eukaryota</taxon>
        <taxon>Fungi</taxon>
        <taxon>Dikarya</taxon>
        <taxon>Ascomycota</taxon>
        <taxon>Pezizomycotina</taxon>
        <taxon>Eurotiomycetes</taxon>
        <taxon>Eurotiomycetidae</taxon>
        <taxon>Eurotiales</taxon>
        <taxon>Aspergillaceae</taxon>
        <taxon>Aspergillus</taxon>
        <taxon>Aspergillus subgen. Fumigati</taxon>
    </lineage>
</organism>
<reference key="1">
    <citation type="journal article" date="2008" name="PLoS Genet.">
        <title>Genomic islands in the pathogenic filamentous fungus Aspergillus fumigatus.</title>
        <authorList>
            <person name="Fedorova N.D."/>
            <person name="Khaldi N."/>
            <person name="Joardar V.S."/>
            <person name="Maiti R."/>
            <person name="Amedeo P."/>
            <person name="Anderson M.J."/>
            <person name="Crabtree J."/>
            <person name="Silva J.C."/>
            <person name="Badger J.H."/>
            <person name="Albarraq A."/>
            <person name="Angiuoli S."/>
            <person name="Bussey H."/>
            <person name="Bowyer P."/>
            <person name="Cotty P.J."/>
            <person name="Dyer P.S."/>
            <person name="Egan A."/>
            <person name="Galens K."/>
            <person name="Fraser-Liggett C.M."/>
            <person name="Haas B.J."/>
            <person name="Inman J.M."/>
            <person name="Kent R."/>
            <person name="Lemieux S."/>
            <person name="Malavazi I."/>
            <person name="Orvis J."/>
            <person name="Roemer T."/>
            <person name="Ronning C.M."/>
            <person name="Sundaram J.P."/>
            <person name="Sutton G."/>
            <person name="Turner G."/>
            <person name="Venter J.C."/>
            <person name="White O.R."/>
            <person name="Whitty B.R."/>
            <person name="Youngman P."/>
            <person name="Wolfe K.H."/>
            <person name="Goldman G.H."/>
            <person name="Wortman J.R."/>
            <person name="Jiang B."/>
            <person name="Denning D.W."/>
            <person name="Nierman W.C."/>
        </authorList>
    </citation>
    <scope>NUCLEOTIDE SEQUENCE [LARGE SCALE GENOMIC DNA]</scope>
    <source>
        <strain>ATCC 1020 / DSM 3700 / CBS 544.65 / FGSC A1164 / JCM 1740 / NRRL 181 / WB 181</strain>
    </source>
</reference>
<evidence type="ECO:0000255" key="1">
    <source>
        <dbReference type="HAMAP-Rule" id="MF_03037"/>
    </source>
</evidence>
<evidence type="ECO:0000256" key="2">
    <source>
        <dbReference type="SAM" id="MobiDB-lite"/>
    </source>
</evidence>